<proteinExistence type="inferred from homology"/>
<dbReference type="EMBL" id="CP000948">
    <property type="protein sequence ID" value="ACB04918.1"/>
    <property type="molecule type" value="Genomic_DNA"/>
</dbReference>
<dbReference type="RefSeq" id="WP_000217137.1">
    <property type="nucleotide sequence ID" value="NC_010473.1"/>
</dbReference>
<dbReference type="SMR" id="B1XB72"/>
<dbReference type="GeneID" id="75204579"/>
<dbReference type="KEGG" id="ecd:ECDH10B_4095"/>
<dbReference type="HOGENOM" id="CLU_000445_88_5_6"/>
<dbReference type="GO" id="GO:0005737">
    <property type="term" value="C:cytoplasm"/>
    <property type="evidence" value="ECO:0007669"/>
    <property type="project" value="UniProtKB-SubCell"/>
</dbReference>
<dbReference type="GO" id="GO:0003700">
    <property type="term" value="F:DNA-binding transcription factor activity"/>
    <property type="evidence" value="ECO:0007669"/>
    <property type="project" value="UniProtKB-UniRule"/>
</dbReference>
<dbReference type="GO" id="GO:0043565">
    <property type="term" value="F:sequence-specific DNA binding"/>
    <property type="evidence" value="ECO:0007669"/>
    <property type="project" value="InterPro"/>
</dbReference>
<dbReference type="GO" id="GO:0045893">
    <property type="term" value="P:positive regulation of DNA-templated transcription"/>
    <property type="evidence" value="ECO:0007669"/>
    <property type="project" value="UniProtKB-UniRule"/>
</dbReference>
<dbReference type="GO" id="GO:0019299">
    <property type="term" value="P:rhamnose metabolic process"/>
    <property type="evidence" value="ECO:0007669"/>
    <property type="project" value="UniProtKB-UniRule"/>
</dbReference>
<dbReference type="CDD" id="cd06977">
    <property type="entry name" value="cupin_RhaR_RhaS-like_N"/>
    <property type="match status" value="1"/>
</dbReference>
<dbReference type="FunFam" id="1.10.10.60:FF:000181">
    <property type="entry name" value="HTH-type transcriptional activator RhaS"/>
    <property type="match status" value="1"/>
</dbReference>
<dbReference type="FunFam" id="2.60.120.10:FF:000041">
    <property type="entry name" value="HTH-type transcriptional activator RhaS"/>
    <property type="match status" value="1"/>
</dbReference>
<dbReference type="Gene3D" id="1.10.10.60">
    <property type="entry name" value="Homeodomain-like"/>
    <property type="match status" value="1"/>
</dbReference>
<dbReference type="Gene3D" id="2.60.120.10">
    <property type="entry name" value="Jelly Rolls"/>
    <property type="match status" value="1"/>
</dbReference>
<dbReference type="HAMAP" id="MF_01534">
    <property type="entry name" value="HTH_type_RhaS"/>
    <property type="match status" value="1"/>
</dbReference>
<dbReference type="InterPro" id="IPR003313">
    <property type="entry name" value="AraC-bd"/>
</dbReference>
<dbReference type="InterPro" id="IPR050204">
    <property type="entry name" value="AraC_XylS_family_regulators"/>
</dbReference>
<dbReference type="InterPro" id="IPR009057">
    <property type="entry name" value="Homeodomain-like_sf"/>
</dbReference>
<dbReference type="InterPro" id="IPR037923">
    <property type="entry name" value="HTH-like"/>
</dbReference>
<dbReference type="InterPro" id="IPR018060">
    <property type="entry name" value="HTH_AraC"/>
</dbReference>
<dbReference type="InterPro" id="IPR018062">
    <property type="entry name" value="HTH_AraC-typ_CS"/>
</dbReference>
<dbReference type="InterPro" id="IPR047220">
    <property type="entry name" value="RhaR_RhaS-like_N"/>
</dbReference>
<dbReference type="InterPro" id="IPR014710">
    <property type="entry name" value="RmlC-like_jellyroll"/>
</dbReference>
<dbReference type="InterPro" id="IPR020449">
    <property type="entry name" value="Tscrpt_reg_AraC-type_HTH"/>
</dbReference>
<dbReference type="InterPro" id="IPR023609">
    <property type="entry name" value="Tscrpt_reg_HTH_RhaS"/>
</dbReference>
<dbReference type="NCBIfam" id="NF010028">
    <property type="entry name" value="PRK13503.1"/>
    <property type="match status" value="1"/>
</dbReference>
<dbReference type="PANTHER" id="PTHR46796:SF13">
    <property type="entry name" value="HTH-TYPE TRANSCRIPTIONAL ACTIVATOR RHAS"/>
    <property type="match status" value="1"/>
</dbReference>
<dbReference type="PANTHER" id="PTHR46796">
    <property type="entry name" value="HTH-TYPE TRANSCRIPTIONAL ACTIVATOR RHAS-RELATED"/>
    <property type="match status" value="1"/>
</dbReference>
<dbReference type="Pfam" id="PF02311">
    <property type="entry name" value="AraC_binding"/>
    <property type="match status" value="1"/>
</dbReference>
<dbReference type="Pfam" id="PF12833">
    <property type="entry name" value="HTH_18"/>
    <property type="match status" value="1"/>
</dbReference>
<dbReference type="PRINTS" id="PR00032">
    <property type="entry name" value="HTHARAC"/>
</dbReference>
<dbReference type="SMART" id="SM00342">
    <property type="entry name" value="HTH_ARAC"/>
    <property type="match status" value="1"/>
</dbReference>
<dbReference type="SUPFAM" id="SSF46689">
    <property type="entry name" value="Homeodomain-like"/>
    <property type="match status" value="2"/>
</dbReference>
<dbReference type="SUPFAM" id="SSF51215">
    <property type="entry name" value="Regulatory protein AraC"/>
    <property type="match status" value="1"/>
</dbReference>
<dbReference type="PROSITE" id="PS00041">
    <property type="entry name" value="HTH_ARAC_FAMILY_1"/>
    <property type="match status" value="1"/>
</dbReference>
<dbReference type="PROSITE" id="PS01124">
    <property type="entry name" value="HTH_ARAC_FAMILY_2"/>
    <property type="match status" value="1"/>
</dbReference>
<organism>
    <name type="scientific">Escherichia coli (strain K12 / DH10B)</name>
    <dbReference type="NCBI Taxonomy" id="316385"/>
    <lineage>
        <taxon>Bacteria</taxon>
        <taxon>Pseudomonadati</taxon>
        <taxon>Pseudomonadota</taxon>
        <taxon>Gammaproteobacteria</taxon>
        <taxon>Enterobacterales</taxon>
        <taxon>Enterobacteriaceae</taxon>
        <taxon>Escherichia</taxon>
    </lineage>
</organism>
<gene>
    <name evidence="1" type="primary">rhaS</name>
    <name type="ordered locus">ECDH10B_4095</name>
</gene>
<comment type="function">
    <text evidence="1">Activates expression of the rhaBAD and rhaT operons.</text>
</comment>
<comment type="subunit">
    <text evidence="1">Binds DNA as a dimer.</text>
</comment>
<comment type="subcellular location">
    <subcellularLocation>
        <location evidence="1">Cytoplasm</location>
    </subcellularLocation>
</comment>
<accession>B1XB72</accession>
<evidence type="ECO:0000255" key="1">
    <source>
        <dbReference type="HAMAP-Rule" id="MF_01534"/>
    </source>
</evidence>
<protein>
    <recommendedName>
        <fullName evidence="1">HTH-type transcriptional activator RhaS</fullName>
    </recommendedName>
    <alternativeName>
        <fullName evidence="1">L-rhamnose operon regulatory protein RhaS</fullName>
    </alternativeName>
</protein>
<keyword id="KW-0010">Activator</keyword>
<keyword id="KW-0963">Cytoplasm</keyword>
<keyword id="KW-0238">DNA-binding</keyword>
<keyword id="KW-0677">Repeat</keyword>
<keyword id="KW-0684">Rhamnose metabolism</keyword>
<keyword id="KW-0804">Transcription</keyword>
<keyword id="KW-0805">Transcription regulation</keyword>
<reference key="1">
    <citation type="journal article" date="2008" name="J. Bacteriol.">
        <title>The complete genome sequence of Escherichia coli DH10B: insights into the biology of a laboratory workhorse.</title>
        <authorList>
            <person name="Durfee T."/>
            <person name="Nelson R."/>
            <person name="Baldwin S."/>
            <person name="Plunkett G. III"/>
            <person name="Burland V."/>
            <person name="Mau B."/>
            <person name="Petrosino J.F."/>
            <person name="Qin X."/>
            <person name="Muzny D.M."/>
            <person name="Ayele M."/>
            <person name="Gibbs R.A."/>
            <person name="Csorgo B."/>
            <person name="Posfai G."/>
            <person name="Weinstock G.M."/>
            <person name="Blattner F.R."/>
        </authorList>
    </citation>
    <scope>NUCLEOTIDE SEQUENCE [LARGE SCALE GENOMIC DNA]</scope>
    <source>
        <strain>K12 / DH10B</strain>
    </source>
</reference>
<feature type="chain" id="PRO_1000200948" description="HTH-type transcriptional activator RhaS">
    <location>
        <begin position="1"/>
        <end position="278"/>
    </location>
</feature>
<feature type="domain" description="HTH araC/xylS-type" evidence="1">
    <location>
        <begin position="174"/>
        <end position="272"/>
    </location>
</feature>
<feature type="DNA-binding region" description="H-T-H motif" evidence="1">
    <location>
        <begin position="191"/>
        <end position="212"/>
    </location>
</feature>
<feature type="DNA-binding region" description="H-T-H motif" evidence="1">
    <location>
        <begin position="239"/>
        <end position="262"/>
    </location>
</feature>
<feature type="site" description="Interaction with sigma-70" evidence="1">
    <location>
        <position position="241"/>
    </location>
</feature>
<feature type="site" description="Interaction with sigma-70" evidence="1">
    <location>
        <position position="250"/>
    </location>
</feature>
<sequence length="278" mass="32315">MTVLHSVDFFPSGNASVAIEPRLPQADFPEHHHDFHEIVIVEHGTGIHVFNGQPYTITGGTVCFVRDHDRHLYEHTDNLCLTNVLYRSPDRFQFLAGLNQLLPQELDGQYPSHWRVNHSVLQQVRQLVAQMEQQEGENDLPSTASREILFMQLLLLLRKSSLQENLENSASRLNLLLAWLEDHFADEVNWDAVADQFSLSLRTLHRQLKQQTGLTPQRYLNRLRLMKARHLLRHSEASVTDIAYRCGFSDSNHFSTLFRREFNWSPRDIRQGRDGFLQ</sequence>
<name>RHAS_ECODH</name>